<protein>
    <recommendedName>
        <fullName>Protein ORF C</fullName>
    </recommendedName>
</protein>
<organism>
    <name type="scientific">Elephantid herpesvirus 1 (isolate Asian elephant/Berlin/Kiba/1998)</name>
    <name type="common">EIHV-1</name>
    <name type="synonym">Elephant endotheliotropic herpesvirus</name>
    <dbReference type="NCBI Taxonomy" id="654902"/>
    <lineage>
        <taxon>Viruses</taxon>
        <taxon>Duplodnaviria</taxon>
        <taxon>Heunggongvirae</taxon>
        <taxon>Peploviricota</taxon>
        <taxon>Herviviricetes</taxon>
        <taxon>Herpesvirales</taxon>
        <taxon>Orthoherpesviridae</taxon>
        <taxon>Betaherpesvirinae</taxon>
        <taxon>Proboscivirus</taxon>
        <taxon>Proboscivirus elephantidbeta1</taxon>
        <taxon>Elephantid herpesvirus 1</taxon>
    </lineage>
</organism>
<organismHost>
    <name type="scientific">Elephas maximus</name>
    <name type="common">Indian elephant</name>
    <dbReference type="NCBI Taxonomy" id="9783"/>
</organismHost>
<organismHost>
    <name type="scientific">Loxodonta africana</name>
    <name type="common">African elephant</name>
    <dbReference type="NCBI Taxonomy" id="9785"/>
</organismHost>
<organismHost>
    <name type="scientific">Loxodonta cyclotis</name>
    <name type="common">African forest elephant</name>
    <dbReference type="NCBI Taxonomy" id="99490"/>
</organismHost>
<dbReference type="EMBL" id="AF322977">
    <property type="protein sequence ID" value="ABG36567.1"/>
    <property type="molecule type" value="Genomic_DNA"/>
</dbReference>
<dbReference type="SMR" id="Q18LF2"/>
<feature type="chain" id="PRO_0000408183" description="Protein ORF C">
    <location>
        <begin position="1"/>
        <end position="1483"/>
    </location>
</feature>
<feature type="region of interest" description="Disordered" evidence="2">
    <location>
        <begin position="135"/>
        <end position="268"/>
    </location>
</feature>
<feature type="region of interest" description="Disordered" evidence="2">
    <location>
        <begin position="306"/>
        <end position="334"/>
    </location>
</feature>
<feature type="region of interest" description="Disordered" evidence="2">
    <location>
        <begin position="383"/>
        <end position="506"/>
    </location>
</feature>
<feature type="region of interest" description="Disordered" evidence="2">
    <location>
        <begin position="518"/>
        <end position="653"/>
    </location>
</feature>
<feature type="region of interest" description="Disordered" evidence="2">
    <location>
        <begin position="680"/>
        <end position="911"/>
    </location>
</feature>
<feature type="region of interest" description="Disordered" evidence="2">
    <location>
        <begin position="949"/>
        <end position="976"/>
    </location>
</feature>
<feature type="region of interest" description="Disordered" evidence="2">
    <location>
        <begin position="1013"/>
        <end position="1061"/>
    </location>
</feature>
<feature type="region of interest" description="Disordered" evidence="2">
    <location>
        <begin position="1089"/>
        <end position="1299"/>
    </location>
</feature>
<feature type="region of interest" description="Disordered" evidence="2">
    <location>
        <begin position="1454"/>
        <end position="1483"/>
    </location>
</feature>
<feature type="coiled-coil region" evidence="1">
    <location>
        <begin position="1408"/>
        <end position="1438"/>
    </location>
</feature>
<feature type="compositionally biased region" description="Low complexity" evidence="2">
    <location>
        <begin position="141"/>
        <end position="153"/>
    </location>
</feature>
<feature type="compositionally biased region" description="Polar residues" evidence="2">
    <location>
        <begin position="157"/>
        <end position="170"/>
    </location>
</feature>
<feature type="compositionally biased region" description="Low complexity" evidence="2">
    <location>
        <begin position="190"/>
        <end position="206"/>
    </location>
</feature>
<feature type="compositionally biased region" description="Low complexity" evidence="2">
    <location>
        <begin position="220"/>
        <end position="251"/>
    </location>
</feature>
<feature type="compositionally biased region" description="Polar residues" evidence="2">
    <location>
        <begin position="252"/>
        <end position="264"/>
    </location>
</feature>
<feature type="compositionally biased region" description="Low complexity" evidence="2">
    <location>
        <begin position="424"/>
        <end position="449"/>
    </location>
</feature>
<feature type="compositionally biased region" description="Low complexity" evidence="2">
    <location>
        <begin position="474"/>
        <end position="483"/>
    </location>
</feature>
<feature type="compositionally biased region" description="Low complexity" evidence="2">
    <location>
        <begin position="529"/>
        <end position="541"/>
    </location>
</feature>
<feature type="compositionally biased region" description="Polar residues" evidence="2">
    <location>
        <begin position="596"/>
        <end position="607"/>
    </location>
</feature>
<feature type="compositionally biased region" description="Basic and acidic residues" evidence="2">
    <location>
        <begin position="609"/>
        <end position="621"/>
    </location>
</feature>
<feature type="compositionally biased region" description="Polar residues" evidence="2">
    <location>
        <begin position="622"/>
        <end position="640"/>
    </location>
</feature>
<feature type="compositionally biased region" description="Basic and acidic residues" evidence="2">
    <location>
        <begin position="680"/>
        <end position="689"/>
    </location>
</feature>
<feature type="compositionally biased region" description="Polar residues" evidence="2">
    <location>
        <begin position="699"/>
        <end position="710"/>
    </location>
</feature>
<feature type="compositionally biased region" description="Basic and acidic residues" evidence="2">
    <location>
        <begin position="740"/>
        <end position="749"/>
    </location>
</feature>
<feature type="compositionally biased region" description="Low complexity" evidence="2">
    <location>
        <begin position="754"/>
        <end position="774"/>
    </location>
</feature>
<feature type="compositionally biased region" description="Polar residues" evidence="2">
    <location>
        <begin position="841"/>
        <end position="876"/>
    </location>
</feature>
<feature type="compositionally biased region" description="Low complexity" evidence="2">
    <location>
        <begin position="894"/>
        <end position="909"/>
    </location>
</feature>
<feature type="compositionally biased region" description="Polar residues" evidence="2">
    <location>
        <begin position="1096"/>
        <end position="1109"/>
    </location>
</feature>
<feature type="compositionally biased region" description="Polar residues" evidence="2">
    <location>
        <begin position="1116"/>
        <end position="1125"/>
    </location>
</feature>
<feature type="compositionally biased region" description="Low complexity" evidence="2">
    <location>
        <begin position="1148"/>
        <end position="1158"/>
    </location>
</feature>
<feature type="compositionally biased region" description="Polar residues" evidence="2">
    <location>
        <begin position="1188"/>
        <end position="1202"/>
    </location>
</feature>
<feature type="compositionally biased region" description="Low complexity" evidence="2">
    <location>
        <begin position="1204"/>
        <end position="1226"/>
    </location>
</feature>
<feature type="compositionally biased region" description="Low complexity" evidence="2">
    <location>
        <begin position="1233"/>
        <end position="1251"/>
    </location>
</feature>
<feature type="compositionally biased region" description="Polar residues" evidence="2">
    <location>
        <begin position="1258"/>
        <end position="1276"/>
    </location>
</feature>
<feature type="compositionally biased region" description="Low complexity" evidence="2">
    <location>
        <begin position="1284"/>
        <end position="1299"/>
    </location>
</feature>
<sequence>MRYLSAEHDDFEKSRIFKSVLTVGAGVAPNTNSCATFKAKSVKNSVERMHTMQRDEIRDEAARHAACPRYTDMNVLNIVRDFDQGAFGGPVDDNLDIFEAEVPEAGRRAAGTAAPRDNTAVPELELMRAMHRASLNDRPPAAGSAQRGSAGSRQPRDNLTPTAADTTGAQASVDLISRPIYQTEQPRPPASNVQQQAAAAALRRQQQPPPGVRRPRSRQARQQQPQQPARPPQTTETQTSNNSNTNNTTATRQVFEQQGPSTIQGRPPTETEILNELFNCHAEIPPLEHVTGHDGYTITTPLFTSVPYQNQTRRSRPQGDNEVPPPTEGDLRPVIPRIPYESETGTETQDDTATGGEITTLVAPSQSDRIQLQIPRSIRNLTRRRAAAAAASQTGSADTPIVTPQPEQTAVPPVLRPPVFRAPSGQSSVSQQQPIQTSNVITTDTTTGTSAPSGDNDSRRAWSPPPWVRRESSSNEPSRQSQSVIEPDEQRYANLPPPPDWLFKRHGVPPRPLRVLTSIDDMSSGCDDTMTQSGTTSSTTRQPPPPNPFAPSRRPQSSGGRCRPPQNGSQGPQHSDDDDSPYPLGSRRQPVPYGTGSVTTTQPSGQLPSDDRGRPAPERRQQPTSRQTVAQTNIIPNTSGGADDDNTPPDRNRLTTFLDEMKRTNWETVEEYLNAIEEDRQRRETEAEHTNLLLPESHTGVTPQRSNNPFMPQVDLDTIPTQDRQETQRQRPSPKPKPKSLREYRRRDPLTGMGRSYTDGSTTSDGDSSDNSWSDESRRPRRRVGSTLVRPPRSHSAEDASGAGGKIKGTARKSPHSSRAPAQQGAGTADLTELAGMASLNLKSPSPRTKLTRSSSLKSPGTTTRDTQQTSHPLTRSASLSSKSSNPFMPRPPDSGGSSDGNTGSSQTSVSTLGINAQQCKFRVPNAHKMFTMVNGKPRLPRMRSAWYSSDDGGESGLECLRTPAPTRKTGGRGGSKITVDVKKIMATAKGSQQAKKCLDKIIKHAGEAERYALQQPSPEPPAGSISARAAPPPKPRTGTRSASQDRSNTRETVPVATDLIDISSAPSSLTQQVSTSASQTTCDGIQLFSVAPPGGSTSQSVQKPSSIPLQPIVTGPSTMTSQSVTDHDGSSVTKKPVISQGTFKHTSQSQPSSEQPAPGEPQPDDQLRDFIAELEGTDVPAPPVPEQPQSTVTNTQTQDVLPSQGSSKTTQQTTSSTQKSSKTGSAPTSGPKSALSKTKSSTSDTASGKSVTRKGSAASSTDPTTKPTRKVSINATEPKKGSKSSTKQSTKTSTQPSDKNNILLNAKVVTIDGDRINIADSNISVFAPTQPTATATQPVTSESTPALPPQLSIPQGQQSVTNIFAPIVPPTNTLSAQATSCTQPLEQRVSLNQPDNPPRRRVVSSFAEQIRNLEVDELKILRQQVRERIANERQQQDSPMDVDRRLALDTLEDMLVSEESAAPTPLPMDTGRFTPKSDVDMS</sequence>
<keyword id="KW-0175">Coiled coil</keyword>
<evidence type="ECO:0000255" key="1"/>
<evidence type="ECO:0000256" key="2">
    <source>
        <dbReference type="SAM" id="MobiDB-lite"/>
    </source>
</evidence>
<name>ORFC_ELHVK</name>
<proteinExistence type="predicted"/>
<reference key="1">
    <citation type="journal article" date="2007" name="J. Virol.">
        <title>Identification of novel rodent herpesviruses, including the first gammaherpesvirus of Mus musculus.</title>
        <authorList>
            <person name="Ehlers B."/>
            <person name="Kuchler J."/>
            <person name="Yasmum N."/>
            <person name="Dural G."/>
            <person name="Voigt S."/>
            <person name="Schmidt-Chanasit J."/>
            <person name="Jakel T."/>
            <person name="Matuschka F.R."/>
            <person name="Richter D."/>
            <person name="Essbauer S."/>
            <person name="Hughes D.J."/>
            <person name="Summers C."/>
            <person name="Bennett M."/>
            <person name="Stewart J.P."/>
            <person name="Ulrich R.G."/>
        </authorList>
    </citation>
    <scope>NUCLEOTIDE SEQUENCE [GENOMIC DNA]</scope>
</reference>
<reference key="2">
    <citation type="journal article" date="2001" name="J. Gen. Virol.">
        <title>Genetic and ultrastructural characterization of a European isolate of the fatal endotheliotropic elephant herpesvirus.</title>
        <authorList>
            <person name="Ehlers B."/>
            <person name="Burkhardt S."/>
            <person name="Goltz M."/>
            <person name="Bergmann V."/>
            <person name="Ochs A."/>
            <person name="Weiler H."/>
            <person name="Hentschke J."/>
        </authorList>
    </citation>
    <scope>NUCLEOTIDE SEQUENCE [GENOMIC DNA]</scope>
</reference>
<accession>Q18LF2</accession>